<keyword id="KW-0472">Membrane</keyword>
<keyword id="KW-1185">Reference proteome</keyword>
<keyword id="KW-0677">Repeat</keyword>
<keyword id="KW-0812">Transmembrane</keyword>
<keyword id="KW-1133">Transmembrane helix</keyword>
<name>WTR44_ARATH</name>
<gene>
    <name type="ordered locus">At5g47470</name>
    <name type="ORF">MNJ7.6</name>
</gene>
<evidence type="ECO:0000250" key="1"/>
<evidence type="ECO:0000255" key="2"/>
<evidence type="ECO:0000305" key="3"/>
<organism>
    <name type="scientific">Arabidopsis thaliana</name>
    <name type="common">Mouse-ear cress</name>
    <dbReference type="NCBI Taxonomy" id="3702"/>
    <lineage>
        <taxon>Eukaryota</taxon>
        <taxon>Viridiplantae</taxon>
        <taxon>Streptophyta</taxon>
        <taxon>Embryophyta</taxon>
        <taxon>Tracheophyta</taxon>
        <taxon>Spermatophyta</taxon>
        <taxon>Magnoliopsida</taxon>
        <taxon>eudicotyledons</taxon>
        <taxon>Gunneridae</taxon>
        <taxon>Pentapetalae</taxon>
        <taxon>rosids</taxon>
        <taxon>malvids</taxon>
        <taxon>Brassicales</taxon>
        <taxon>Brassicaceae</taxon>
        <taxon>Camelineae</taxon>
        <taxon>Arabidopsis</taxon>
    </lineage>
</organism>
<sequence>MQFFCVNLYRSVLNLLEERMKTEMIEEMVIVGGLVMVQFVYAGNSLLMSYLMSLGLGPFTIVIFSTFATFIILSPFAILFERKQWPNELSLRLIGKLVLISFAGVTLFQSLFLEGIRLTSPAMATAMPNLAPGLIFFIAWIVGLEKMNLKCVYSKLKILGTLLCVFGALAMSVMHSTSISHKEEDDTPIFVFDRDKVVGCIYLLGAVFVLSTNVVLQASTLAEFPAPISLSAITALLGVLITTVVLLLQNRKTKVLASSLISFGNLVGYSVLAGAVSGACVSFNGWAMKKRGPVFVSMFSPFATVISVAFAVLTLGESVSLGSVGGMVLMFVGLYLVLWAKGKEGFSEIESFESEFDSKKPLLS</sequence>
<proteinExistence type="inferred from homology"/>
<dbReference type="EMBL" id="AB025628">
    <property type="protein sequence ID" value="BAB09073.1"/>
    <property type="molecule type" value="Genomic_DNA"/>
</dbReference>
<dbReference type="EMBL" id="CP002688">
    <property type="protein sequence ID" value="AED95523.1"/>
    <property type="molecule type" value="Genomic_DNA"/>
</dbReference>
<dbReference type="RefSeq" id="NP_199558.1">
    <property type="nucleotide sequence ID" value="NM_124120.1"/>
</dbReference>
<dbReference type="SMR" id="Q9FGL0"/>
<dbReference type="STRING" id="3702.Q9FGL0"/>
<dbReference type="iPTMnet" id="Q9FGL0"/>
<dbReference type="PaxDb" id="3702-AT5G47470.1"/>
<dbReference type="EnsemblPlants" id="AT5G47470.1">
    <property type="protein sequence ID" value="AT5G47470.1"/>
    <property type="gene ID" value="AT5G47470"/>
</dbReference>
<dbReference type="GeneID" id="834797"/>
<dbReference type="Gramene" id="AT5G47470.1">
    <property type="protein sequence ID" value="AT5G47470.1"/>
    <property type="gene ID" value="AT5G47470"/>
</dbReference>
<dbReference type="KEGG" id="ath:AT5G47470"/>
<dbReference type="Araport" id="AT5G47470"/>
<dbReference type="TAIR" id="AT5G47470">
    <property type="gene designation" value="UMAMIT7"/>
</dbReference>
<dbReference type="eggNOG" id="ENOG502QVME">
    <property type="taxonomic scope" value="Eukaryota"/>
</dbReference>
<dbReference type="HOGENOM" id="CLU_025359_1_2_1"/>
<dbReference type="InParanoid" id="Q9FGL0"/>
<dbReference type="OMA" id="ACSPWED"/>
<dbReference type="PhylomeDB" id="Q9FGL0"/>
<dbReference type="PRO" id="PR:Q9FGL0"/>
<dbReference type="Proteomes" id="UP000006548">
    <property type="component" value="Chromosome 5"/>
</dbReference>
<dbReference type="ExpressionAtlas" id="Q9FGL0">
    <property type="expression patterns" value="baseline and differential"/>
</dbReference>
<dbReference type="GO" id="GO:0016020">
    <property type="term" value="C:membrane"/>
    <property type="evidence" value="ECO:0007669"/>
    <property type="project" value="UniProtKB-SubCell"/>
</dbReference>
<dbReference type="GO" id="GO:0022857">
    <property type="term" value="F:transmembrane transporter activity"/>
    <property type="evidence" value="ECO:0007669"/>
    <property type="project" value="InterPro"/>
</dbReference>
<dbReference type="InterPro" id="IPR000620">
    <property type="entry name" value="EamA_dom"/>
</dbReference>
<dbReference type="InterPro" id="IPR030184">
    <property type="entry name" value="WAT1-related"/>
</dbReference>
<dbReference type="PANTHER" id="PTHR31218">
    <property type="entry name" value="WAT1-RELATED PROTEIN"/>
    <property type="match status" value="1"/>
</dbReference>
<dbReference type="Pfam" id="PF00892">
    <property type="entry name" value="EamA"/>
    <property type="match status" value="2"/>
</dbReference>
<dbReference type="SUPFAM" id="SSF103481">
    <property type="entry name" value="Multidrug resistance efflux transporter EmrE"/>
    <property type="match status" value="2"/>
</dbReference>
<reference key="1">
    <citation type="submission" date="1999-04" db="EMBL/GenBank/DDBJ databases">
        <title>Structural analysis of Arabidopsis thaliana chromosome 5. XI.</title>
        <authorList>
            <person name="Kaneko T."/>
            <person name="Katoh T."/>
            <person name="Asamizu E."/>
            <person name="Sato S."/>
            <person name="Nakamura Y."/>
            <person name="Kotani H."/>
            <person name="Tabata S."/>
        </authorList>
    </citation>
    <scope>NUCLEOTIDE SEQUENCE [LARGE SCALE GENOMIC DNA]</scope>
    <source>
        <strain>cv. Columbia</strain>
    </source>
</reference>
<reference key="2">
    <citation type="journal article" date="2017" name="Plant J.">
        <title>Araport11: a complete reannotation of the Arabidopsis thaliana reference genome.</title>
        <authorList>
            <person name="Cheng C.Y."/>
            <person name="Krishnakumar V."/>
            <person name="Chan A.P."/>
            <person name="Thibaud-Nissen F."/>
            <person name="Schobel S."/>
            <person name="Town C.D."/>
        </authorList>
    </citation>
    <scope>GENOME REANNOTATION</scope>
    <source>
        <strain>cv. Columbia</strain>
    </source>
</reference>
<feature type="chain" id="PRO_0000421351" description="WAT1-related protein At5g47470">
    <location>
        <begin position="1"/>
        <end position="364"/>
    </location>
</feature>
<feature type="transmembrane region" description="Helical" evidence="2">
    <location>
        <begin position="28"/>
        <end position="48"/>
    </location>
</feature>
<feature type="transmembrane region" description="Helical" evidence="2">
    <location>
        <begin position="59"/>
        <end position="79"/>
    </location>
</feature>
<feature type="transmembrane region" description="Helical" evidence="2">
    <location>
        <begin position="93"/>
        <end position="113"/>
    </location>
</feature>
<feature type="transmembrane region" description="Helical" evidence="2">
    <location>
        <begin position="124"/>
        <end position="144"/>
    </location>
</feature>
<feature type="transmembrane region" description="Helical" evidence="2">
    <location>
        <begin position="158"/>
        <end position="178"/>
    </location>
</feature>
<feature type="transmembrane region" description="Helical" evidence="2">
    <location>
        <begin position="197"/>
        <end position="217"/>
    </location>
</feature>
<feature type="transmembrane region" description="Helical" evidence="2">
    <location>
        <begin position="228"/>
        <end position="248"/>
    </location>
</feature>
<feature type="transmembrane region" description="Helical" evidence="2">
    <location>
        <begin position="255"/>
        <end position="275"/>
    </location>
</feature>
<feature type="transmembrane region" description="Helical" evidence="2">
    <location>
        <begin position="293"/>
        <end position="313"/>
    </location>
</feature>
<feature type="transmembrane region" description="Helical" evidence="2">
    <location>
        <begin position="319"/>
        <end position="339"/>
    </location>
</feature>
<feature type="domain" description="EamA 1">
    <location>
        <begin position="40"/>
        <end position="172"/>
    </location>
</feature>
<feature type="domain" description="EamA 2">
    <location>
        <begin position="219"/>
        <end position="338"/>
    </location>
</feature>
<protein>
    <recommendedName>
        <fullName>WAT1-related protein At5g47470</fullName>
    </recommendedName>
</protein>
<comment type="subcellular location">
    <subcellularLocation>
        <location evidence="1">Membrane</location>
        <topology evidence="3">Multi-pass membrane protein</topology>
    </subcellularLocation>
</comment>
<comment type="similarity">
    <text evidence="3">Belongs to the drug/metabolite transporter (DMT) superfamily. Plant drug/metabolite exporter (P-DME) (TC 2.A.7.4) family.</text>
</comment>
<accession>Q9FGL0</accession>